<proteinExistence type="inferred from homology"/>
<accession>B6YRA7</accession>
<name>KAD_AZOPC</name>
<reference key="1">
    <citation type="journal article" date="2008" name="Science">
        <title>Genome of an endosymbiont coupling N2 fixation to cellulolysis within RT protist cells in termite gut.</title>
        <authorList>
            <person name="Hongoh Y."/>
            <person name="Sharma V.K."/>
            <person name="Prakash T."/>
            <person name="Noda S."/>
            <person name="Toh H."/>
            <person name="Taylor T.D."/>
            <person name="Kudo T."/>
            <person name="Sakaki Y."/>
            <person name="Toyoda A."/>
            <person name="Hattori M."/>
            <person name="Ohkuma M."/>
        </authorList>
    </citation>
    <scope>NUCLEOTIDE SEQUENCE [LARGE SCALE GENOMIC DNA]</scope>
</reference>
<comment type="function">
    <text evidence="1">Catalyzes the reversible transfer of the terminal phosphate group between ATP and AMP. Plays an important role in cellular energy homeostasis and in adenine nucleotide metabolism.</text>
</comment>
<comment type="catalytic activity">
    <reaction evidence="1">
        <text>AMP + ATP = 2 ADP</text>
        <dbReference type="Rhea" id="RHEA:12973"/>
        <dbReference type="ChEBI" id="CHEBI:30616"/>
        <dbReference type="ChEBI" id="CHEBI:456215"/>
        <dbReference type="ChEBI" id="CHEBI:456216"/>
        <dbReference type="EC" id="2.7.4.3"/>
    </reaction>
</comment>
<comment type="pathway">
    <text evidence="1">Purine metabolism; AMP biosynthesis via salvage pathway; AMP from ADP: step 1/1.</text>
</comment>
<comment type="subunit">
    <text evidence="1">Monomer.</text>
</comment>
<comment type="subcellular location">
    <subcellularLocation>
        <location evidence="1">Cytoplasm</location>
    </subcellularLocation>
</comment>
<comment type="domain">
    <text evidence="1">Consists of three domains, a large central CORE domain and two small peripheral domains, NMPbind and LID, which undergo movements during catalysis. The LID domain closes over the site of phosphoryl transfer upon ATP binding. Assembling and dissambling the active center during each catalytic cycle provides an effective means to prevent ATP hydrolysis.</text>
</comment>
<comment type="similarity">
    <text evidence="1">Belongs to the adenylate kinase family.</text>
</comment>
<protein>
    <recommendedName>
        <fullName evidence="1">Adenylate kinase</fullName>
        <shortName evidence="1">AK</shortName>
        <ecNumber evidence="1">2.7.4.3</ecNumber>
    </recommendedName>
    <alternativeName>
        <fullName evidence="1">ATP-AMP transphosphorylase</fullName>
    </alternativeName>
    <alternativeName>
        <fullName evidence="1">ATP:AMP phosphotransferase</fullName>
    </alternativeName>
    <alternativeName>
        <fullName evidence="1">Adenylate monophosphate kinase</fullName>
    </alternativeName>
</protein>
<gene>
    <name evidence="1" type="primary">adk</name>
    <name type="ordered locus">CFPG_466</name>
</gene>
<dbReference type="EC" id="2.7.4.3" evidence="1"/>
<dbReference type="EMBL" id="AP010656">
    <property type="protein sequence ID" value="BAG83729.1"/>
    <property type="molecule type" value="Genomic_DNA"/>
</dbReference>
<dbReference type="RefSeq" id="WP_012573490.1">
    <property type="nucleotide sequence ID" value="NC_011565.1"/>
</dbReference>
<dbReference type="SMR" id="B6YRA7"/>
<dbReference type="STRING" id="511995.CFPG_466"/>
<dbReference type="KEGG" id="aps:CFPG_466"/>
<dbReference type="eggNOG" id="COG0563">
    <property type="taxonomic scope" value="Bacteria"/>
</dbReference>
<dbReference type="HOGENOM" id="CLU_032354_4_1_10"/>
<dbReference type="OrthoDB" id="9805030at2"/>
<dbReference type="UniPathway" id="UPA00588">
    <property type="reaction ID" value="UER00649"/>
</dbReference>
<dbReference type="Proteomes" id="UP000000723">
    <property type="component" value="Chromosome"/>
</dbReference>
<dbReference type="GO" id="GO:0005737">
    <property type="term" value="C:cytoplasm"/>
    <property type="evidence" value="ECO:0007669"/>
    <property type="project" value="UniProtKB-SubCell"/>
</dbReference>
<dbReference type="GO" id="GO:0004017">
    <property type="term" value="F:adenylate kinase activity"/>
    <property type="evidence" value="ECO:0007669"/>
    <property type="project" value="UniProtKB-UniRule"/>
</dbReference>
<dbReference type="GO" id="GO:0005524">
    <property type="term" value="F:ATP binding"/>
    <property type="evidence" value="ECO:0007669"/>
    <property type="project" value="UniProtKB-UniRule"/>
</dbReference>
<dbReference type="GO" id="GO:0044209">
    <property type="term" value="P:AMP salvage"/>
    <property type="evidence" value="ECO:0007669"/>
    <property type="project" value="UniProtKB-UniRule"/>
</dbReference>
<dbReference type="CDD" id="cd01428">
    <property type="entry name" value="ADK"/>
    <property type="match status" value="1"/>
</dbReference>
<dbReference type="Gene3D" id="3.40.50.300">
    <property type="entry name" value="P-loop containing nucleotide triphosphate hydrolases"/>
    <property type="match status" value="1"/>
</dbReference>
<dbReference type="HAMAP" id="MF_00235">
    <property type="entry name" value="Adenylate_kinase_Adk"/>
    <property type="match status" value="1"/>
</dbReference>
<dbReference type="InterPro" id="IPR000850">
    <property type="entry name" value="Adenylat/UMP-CMP_kin"/>
</dbReference>
<dbReference type="InterPro" id="IPR033690">
    <property type="entry name" value="Adenylat_kinase_CS"/>
</dbReference>
<dbReference type="InterPro" id="IPR027417">
    <property type="entry name" value="P-loop_NTPase"/>
</dbReference>
<dbReference type="NCBIfam" id="NF001381">
    <property type="entry name" value="PRK00279.1-3"/>
    <property type="match status" value="1"/>
</dbReference>
<dbReference type="NCBIfam" id="NF011100">
    <property type="entry name" value="PRK14527.1"/>
    <property type="match status" value="1"/>
</dbReference>
<dbReference type="NCBIfam" id="NF011104">
    <property type="entry name" value="PRK14531.1"/>
    <property type="match status" value="1"/>
</dbReference>
<dbReference type="PANTHER" id="PTHR23359">
    <property type="entry name" value="NUCLEOTIDE KINASE"/>
    <property type="match status" value="1"/>
</dbReference>
<dbReference type="Pfam" id="PF00406">
    <property type="entry name" value="ADK"/>
    <property type="match status" value="1"/>
</dbReference>
<dbReference type="PRINTS" id="PR00094">
    <property type="entry name" value="ADENYLTKNASE"/>
</dbReference>
<dbReference type="SUPFAM" id="SSF52540">
    <property type="entry name" value="P-loop containing nucleoside triphosphate hydrolases"/>
    <property type="match status" value="1"/>
</dbReference>
<dbReference type="PROSITE" id="PS00113">
    <property type="entry name" value="ADENYLATE_KINASE"/>
    <property type="match status" value="1"/>
</dbReference>
<organism>
    <name type="scientific">Azobacteroides pseudotrichonymphae genomovar. CFP2</name>
    <dbReference type="NCBI Taxonomy" id="511995"/>
    <lineage>
        <taxon>Bacteria</taxon>
        <taxon>Pseudomonadati</taxon>
        <taxon>Bacteroidota</taxon>
        <taxon>Bacteroidia</taxon>
        <taxon>Bacteroidales</taxon>
        <taxon>Candidatus Azobacteroides</taxon>
    </lineage>
</organism>
<feature type="chain" id="PRO_1000100528" description="Adenylate kinase">
    <location>
        <begin position="1"/>
        <end position="191"/>
    </location>
</feature>
<feature type="region of interest" description="NMP" evidence="1">
    <location>
        <begin position="31"/>
        <end position="60"/>
    </location>
</feature>
<feature type="region of interest" description="LID" evidence="1">
    <location>
        <begin position="127"/>
        <end position="137"/>
    </location>
</feature>
<feature type="binding site" evidence="1">
    <location>
        <begin position="11"/>
        <end position="16"/>
    </location>
    <ligand>
        <name>ATP</name>
        <dbReference type="ChEBI" id="CHEBI:30616"/>
    </ligand>
</feature>
<feature type="binding site" evidence="1">
    <location>
        <position position="32"/>
    </location>
    <ligand>
        <name>AMP</name>
        <dbReference type="ChEBI" id="CHEBI:456215"/>
    </ligand>
</feature>
<feature type="binding site" evidence="1">
    <location>
        <position position="37"/>
    </location>
    <ligand>
        <name>AMP</name>
        <dbReference type="ChEBI" id="CHEBI:456215"/>
    </ligand>
</feature>
<feature type="binding site" evidence="1">
    <location>
        <begin position="58"/>
        <end position="60"/>
    </location>
    <ligand>
        <name>AMP</name>
        <dbReference type="ChEBI" id="CHEBI:456215"/>
    </ligand>
</feature>
<feature type="binding site" evidence="1">
    <location>
        <begin position="86"/>
        <end position="89"/>
    </location>
    <ligand>
        <name>AMP</name>
        <dbReference type="ChEBI" id="CHEBI:456215"/>
    </ligand>
</feature>
<feature type="binding site" evidence="1">
    <location>
        <position position="93"/>
    </location>
    <ligand>
        <name>AMP</name>
        <dbReference type="ChEBI" id="CHEBI:456215"/>
    </ligand>
</feature>
<feature type="binding site" evidence="1">
    <location>
        <position position="128"/>
    </location>
    <ligand>
        <name>ATP</name>
        <dbReference type="ChEBI" id="CHEBI:30616"/>
    </ligand>
</feature>
<feature type="binding site" evidence="1">
    <location>
        <position position="134"/>
    </location>
    <ligand>
        <name>AMP</name>
        <dbReference type="ChEBI" id="CHEBI:456215"/>
    </ligand>
</feature>
<feature type="binding site" evidence="1">
    <location>
        <position position="145"/>
    </location>
    <ligand>
        <name>AMP</name>
        <dbReference type="ChEBI" id="CHEBI:456215"/>
    </ligand>
</feature>
<feature type="binding site" evidence="1">
    <location>
        <position position="173"/>
    </location>
    <ligand>
        <name>ATP</name>
        <dbReference type="ChEBI" id="CHEBI:30616"/>
    </ligand>
</feature>
<evidence type="ECO:0000255" key="1">
    <source>
        <dbReference type="HAMAP-Rule" id="MF_00235"/>
    </source>
</evidence>
<keyword id="KW-0067">ATP-binding</keyword>
<keyword id="KW-0963">Cytoplasm</keyword>
<keyword id="KW-0418">Kinase</keyword>
<keyword id="KW-0545">Nucleotide biosynthesis</keyword>
<keyword id="KW-0547">Nucleotide-binding</keyword>
<keyword id="KW-1185">Reference proteome</keyword>
<keyword id="KW-0808">Transferase</keyword>
<sequence>MLNIGIFGAPGSGKGTQSELISEKYSLYPISTGEILRREIKDKTELGKIAEEYINQGQLLPDYLTIRILVDLFDKVDNNKGYIFDGFPRTISQAKALDDLLKEQNTSIAIVFSLSVDEKELIRRLLKRGKLFSRKDDNLETIQNRLTVYREQTESVQEYYRKKGKLMEIIGKNSVEEVFENIVEKIDNLFR</sequence>